<evidence type="ECO:0000255" key="1">
    <source>
        <dbReference type="HAMAP-Rule" id="MF_01326"/>
    </source>
</evidence>
<evidence type="ECO:0000305" key="2"/>
<feature type="chain" id="PRO_0000130649" description="Large ribosomal subunit protein uL24">
    <location>
        <begin position="1"/>
        <end position="104"/>
    </location>
</feature>
<proteinExistence type="inferred from homology"/>
<reference key="1">
    <citation type="journal article" date="2003" name="Nucleic Acids Res.">
        <title>The complete genome sequence and analysis of Corynebacterium diphtheriae NCTC13129.</title>
        <authorList>
            <person name="Cerdeno-Tarraga A.-M."/>
            <person name="Efstratiou A."/>
            <person name="Dover L.G."/>
            <person name="Holden M.T.G."/>
            <person name="Pallen M.J."/>
            <person name="Bentley S.D."/>
            <person name="Besra G.S."/>
            <person name="Churcher C.M."/>
            <person name="James K.D."/>
            <person name="De Zoysa A."/>
            <person name="Chillingworth T."/>
            <person name="Cronin A."/>
            <person name="Dowd L."/>
            <person name="Feltwell T."/>
            <person name="Hamlin N."/>
            <person name="Holroyd S."/>
            <person name="Jagels K."/>
            <person name="Moule S."/>
            <person name="Quail M.A."/>
            <person name="Rabbinowitsch E."/>
            <person name="Rutherford K.M."/>
            <person name="Thomson N.R."/>
            <person name="Unwin L."/>
            <person name="Whitehead S."/>
            <person name="Barrell B.G."/>
            <person name="Parkhill J."/>
        </authorList>
    </citation>
    <scope>NUCLEOTIDE SEQUENCE [LARGE SCALE GENOMIC DNA]</scope>
    <source>
        <strain>ATCC 700971 / NCTC 13129 / Biotype gravis</strain>
    </source>
</reference>
<protein>
    <recommendedName>
        <fullName evidence="1">Large ribosomal subunit protein uL24</fullName>
    </recommendedName>
    <alternativeName>
        <fullName evidence="2">50S ribosomal protein L24</fullName>
    </alternativeName>
</protein>
<organism>
    <name type="scientific">Corynebacterium diphtheriae (strain ATCC 700971 / NCTC 13129 / Biotype gravis)</name>
    <dbReference type="NCBI Taxonomy" id="257309"/>
    <lineage>
        <taxon>Bacteria</taxon>
        <taxon>Bacillati</taxon>
        <taxon>Actinomycetota</taxon>
        <taxon>Actinomycetes</taxon>
        <taxon>Mycobacteriales</taxon>
        <taxon>Corynebacteriaceae</taxon>
        <taxon>Corynebacterium</taxon>
    </lineage>
</organism>
<comment type="function">
    <text evidence="1">One of two assembly initiator proteins, it binds directly to the 5'-end of the 23S rRNA, where it nucleates assembly of the 50S subunit.</text>
</comment>
<comment type="function">
    <text evidence="1">One of the proteins that surrounds the polypeptide exit tunnel on the outside of the subunit.</text>
</comment>
<comment type="subunit">
    <text evidence="1">Part of the 50S ribosomal subunit.</text>
</comment>
<comment type="similarity">
    <text evidence="1">Belongs to the universal ribosomal protein uL24 family.</text>
</comment>
<accession>P60739</accession>
<dbReference type="EMBL" id="BX248355">
    <property type="protein sequence ID" value="CAE48998.1"/>
    <property type="molecule type" value="Genomic_DNA"/>
</dbReference>
<dbReference type="RefSeq" id="WP_004566765.1">
    <property type="nucleotide sequence ID" value="NC_002935.2"/>
</dbReference>
<dbReference type="SMR" id="P60739"/>
<dbReference type="STRING" id="257309.DIP0487"/>
<dbReference type="GeneID" id="97331090"/>
<dbReference type="KEGG" id="cdi:DIP0487"/>
<dbReference type="HOGENOM" id="CLU_093315_2_2_11"/>
<dbReference type="Proteomes" id="UP000002198">
    <property type="component" value="Chromosome"/>
</dbReference>
<dbReference type="GO" id="GO:1990904">
    <property type="term" value="C:ribonucleoprotein complex"/>
    <property type="evidence" value="ECO:0007669"/>
    <property type="project" value="UniProtKB-KW"/>
</dbReference>
<dbReference type="GO" id="GO:0005840">
    <property type="term" value="C:ribosome"/>
    <property type="evidence" value="ECO:0007669"/>
    <property type="project" value="UniProtKB-KW"/>
</dbReference>
<dbReference type="GO" id="GO:0019843">
    <property type="term" value="F:rRNA binding"/>
    <property type="evidence" value="ECO:0007669"/>
    <property type="project" value="UniProtKB-UniRule"/>
</dbReference>
<dbReference type="GO" id="GO:0003735">
    <property type="term" value="F:structural constituent of ribosome"/>
    <property type="evidence" value="ECO:0007669"/>
    <property type="project" value="InterPro"/>
</dbReference>
<dbReference type="GO" id="GO:0006412">
    <property type="term" value="P:translation"/>
    <property type="evidence" value="ECO:0007669"/>
    <property type="project" value="UniProtKB-UniRule"/>
</dbReference>
<dbReference type="CDD" id="cd06089">
    <property type="entry name" value="KOW_RPL26"/>
    <property type="match status" value="1"/>
</dbReference>
<dbReference type="FunFam" id="2.30.30.30:FF:000004">
    <property type="entry name" value="50S ribosomal protein L24"/>
    <property type="match status" value="1"/>
</dbReference>
<dbReference type="Gene3D" id="2.30.30.30">
    <property type="match status" value="1"/>
</dbReference>
<dbReference type="HAMAP" id="MF_01326_B">
    <property type="entry name" value="Ribosomal_uL24_B"/>
    <property type="match status" value="1"/>
</dbReference>
<dbReference type="InterPro" id="IPR005824">
    <property type="entry name" value="KOW"/>
</dbReference>
<dbReference type="InterPro" id="IPR014722">
    <property type="entry name" value="Rib_uL2_dom2"/>
</dbReference>
<dbReference type="InterPro" id="IPR003256">
    <property type="entry name" value="Ribosomal_uL24"/>
</dbReference>
<dbReference type="InterPro" id="IPR005825">
    <property type="entry name" value="Ribosomal_uL24_CS"/>
</dbReference>
<dbReference type="InterPro" id="IPR041988">
    <property type="entry name" value="Ribosomal_uL24_KOW"/>
</dbReference>
<dbReference type="InterPro" id="IPR008991">
    <property type="entry name" value="Translation_prot_SH3-like_sf"/>
</dbReference>
<dbReference type="NCBIfam" id="TIGR01079">
    <property type="entry name" value="rplX_bact"/>
    <property type="match status" value="1"/>
</dbReference>
<dbReference type="PANTHER" id="PTHR12903">
    <property type="entry name" value="MITOCHONDRIAL RIBOSOMAL PROTEIN L24"/>
    <property type="match status" value="1"/>
</dbReference>
<dbReference type="Pfam" id="PF00467">
    <property type="entry name" value="KOW"/>
    <property type="match status" value="1"/>
</dbReference>
<dbReference type="Pfam" id="PF17136">
    <property type="entry name" value="ribosomal_L24"/>
    <property type="match status" value="1"/>
</dbReference>
<dbReference type="SMART" id="SM00739">
    <property type="entry name" value="KOW"/>
    <property type="match status" value="1"/>
</dbReference>
<dbReference type="SUPFAM" id="SSF50104">
    <property type="entry name" value="Translation proteins SH3-like domain"/>
    <property type="match status" value="1"/>
</dbReference>
<dbReference type="PROSITE" id="PS01108">
    <property type="entry name" value="RIBOSOMAL_L24"/>
    <property type="match status" value="1"/>
</dbReference>
<gene>
    <name evidence="1" type="primary">rplX</name>
    <name type="ordered locus">DIP0487</name>
</gene>
<keyword id="KW-1185">Reference proteome</keyword>
<keyword id="KW-0687">Ribonucleoprotein</keyword>
<keyword id="KW-0689">Ribosomal protein</keyword>
<keyword id="KW-0694">RNA-binding</keyword>
<keyword id="KW-0699">rRNA-binding</keyword>
<name>RL24_CORDI</name>
<sequence length="104" mass="11274">MKIHKGDMVLVISGPDKGAKGKVIQAFPKTEKVLVEGVNRIKKHVANSAPERGAESGGIVTQEAPIHVSNVMVLDSDGNPTRVGYRFDENGKKVRISRRNGKDI</sequence>